<protein>
    <recommendedName>
        <fullName evidence="1">Protein translocase subunit SecA 1</fullName>
        <ecNumber evidence="1">7.4.2.8</ecNumber>
    </recommendedName>
</protein>
<dbReference type="EC" id="7.4.2.8" evidence="1"/>
<dbReference type="EMBL" id="CP000471">
    <property type="protein sequence ID" value="ABK45813.1"/>
    <property type="molecule type" value="Genomic_DNA"/>
</dbReference>
<dbReference type="RefSeq" id="WP_011714872.1">
    <property type="nucleotide sequence ID" value="NC_008576.1"/>
</dbReference>
<dbReference type="SMR" id="A0LCX0"/>
<dbReference type="STRING" id="156889.Mmc1_3327"/>
<dbReference type="KEGG" id="mgm:Mmc1_3327"/>
<dbReference type="eggNOG" id="COG0653">
    <property type="taxonomic scope" value="Bacteria"/>
</dbReference>
<dbReference type="HOGENOM" id="CLU_005314_3_0_5"/>
<dbReference type="OrthoDB" id="9805579at2"/>
<dbReference type="Proteomes" id="UP000002586">
    <property type="component" value="Chromosome"/>
</dbReference>
<dbReference type="GO" id="GO:0031522">
    <property type="term" value="C:cell envelope Sec protein transport complex"/>
    <property type="evidence" value="ECO:0007669"/>
    <property type="project" value="TreeGrafter"/>
</dbReference>
<dbReference type="GO" id="GO:0005829">
    <property type="term" value="C:cytosol"/>
    <property type="evidence" value="ECO:0007669"/>
    <property type="project" value="TreeGrafter"/>
</dbReference>
<dbReference type="GO" id="GO:0005886">
    <property type="term" value="C:plasma membrane"/>
    <property type="evidence" value="ECO:0007669"/>
    <property type="project" value="UniProtKB-SubCell"/>
</dbReference>
<dbReference type="GO" id="GO:0005524">
    <property type="term" value="F:ATP binding"/>
    <property type="evidence" value="ECO:0007669"/>
    <property type="project" value="UniProtKB-UniRule"/>
</dbReference>
<dbReference type="GO" id="GO:0046872">
    <property type="term" value="F:metal ion binding"/>
    <property type="evidence" value="ECO:0007669"/>
    <property type="project" value="UniProtKB-KW"/>
</dbReference>
<dbReference type="GO" id="GO:0008564">
    <property type="term" value="F:protein-exporting ATPase activity"/>
    <property type="evidence" value="ECO:0007669"/>
    <property type="project" value="UniProtKB-EC"/>
</dbReference>
<dbReference type="GO" id="GO:0065002">
    <property type="term" value="P:intracellular protein transmembrane transport"/>
    <property type="evidence" value="ECO:0007669"/>
    <property type="project" value="UniProtKB-UniRule"/>
</dbReference>
<dbReference type="GO" id="GO:0017038">
    <property type="term" value="P:protein import"/>
    <property type="evidence" value="ECO:0007669"/>
    <property type="project" value="InterPro"/>
</dbReference>
<dbReference type="GO" id="GO:0006605">
    <property type="term" value="P:protein targeting"/>
    <property type="evidence" value="ECO:0007669"/>
    <property type="project" value="UniProtKB-UniRule"/>
</dbReference>
<dbReference type="GO" id="GO:0043952">
    <property type="term" value="P:protein transport by the Sec complex"/>
    <property type="evidence" value="ECO:0007669"/>
    <property type="project" value="TreeGrafter"/>
</dbReference>
<dbReference type="CDD" id="cd17928">
    <property type="entry name" value="DEXDc_SecA"/>
    <property type="match status" value="1"/>
</dbReference>
<dbReference type="CDD" id="cd18803">
    <property type="entry name" value="SF2_C_secA"/>
    <property type="match status" value="1"/>
</dbReference>
<dbReference type="FunFam" id="3.40.50.300:FF:000113">
    <property type="entry name" value="Preprotein translocase subunit SecA"/>
    <property type="match status" value="1"/>
</dbReference>
<dbReference type="FunFam" id="3.90.1440.10:FF:000001">
    <property type="entry name" value="Preprotein translocase subunit SecA"/>
    <property type="match status" value="1"/>
</dbReference>
<dbReference type="FunFam" id="1.10.3060.10:FF:000003">
    <property type="entry name" value="Protein translocase subunit SecA"/>
    <property type="match status" value="1"/>
</dbReference>
<dbReference type="FunFam" id="3.40.50.300:FF:000334">
    <property type="entry name" value="Protein translocase subunit SecA"/>
    <property type="match status" value="1"/>
</dbReference>
<dbReference type="Gene3D" id="1.10.3060.10">
    <property type="entry name" value="Helical scaffold and wing domains of SecA"/>
    <property type="match status" value="1"/>
</dbReference>
<dbReference type="Gene3D" id="3.40.50.300">
    <property type="entry name" value="P-loop containing nucleotide triphosphate hydrolases"/>
    <property type="match status" value="2"/>
</dbReference>
<dbReference type="Gene3D" id="3.90.1440.10">
    <property type="entry name" value="SecA, preprotein cross-linking domain"/>
    <property type="match status" value="1"/>
</dbReference>
<dbReference type="HAMAP" id="MF_01382">
    <property type="entry name" value="SecA"/>
    <property type="match status" value="1"/>
</dbReference>
<dbReference type="InterPro" id="IPR014001">
    <property type="entry name" value="Helicase_ATP-bd"/>
</dbReference>
<dbReference type="InterPro" id="IPR001650">
    <property type="entry name" value="Helicase_C-like"/>
</dbReference>
<dbReference type="InterPro" id="IPR027417">
    <property type="entry name" value="P-loop_NTPase"/>
</dbReference>
<dbReference type="InterPro" id="IPR004027">
    <property type="entry name" value="SEC_C_motif"/>
</dbReference>
<dbReference type="InterPro" id="IPR000185">
    <property type="entry name" value="SecA"/>
</dbReference>
<dbReference type="InterPro" id="IPR020937">
    <property type="entry name" value="SecA_CS"/>
</dbReference>
<dbReference type="InterPro" id="IPR011115">
    <property type="entry name" value="SecA_DEAD"/>
</dbReference>
<dbReference type="InterPro" id="IPR014018">
    <property type="entry name" value="SecA_motor_DEAD"/>
</dbReference>
<dbReference type="InterPro" id="IPR011130">
    <property type="entry name" value="SecA_preprotein_X-link_dom"/>
</dbReference>
<dbReference type="InterPro" id="IPR044722">
    <property type="entry name" value="SecA_SF2_C"/>
</dbReference>
<dbReference type="InterPro" id="IPR011116">
    <property type="entry name" value="SecA_Wing/Scaffold"/>
</dbReference>
<dbReference type="InterPro" id="IPR036266">
    <property type="entry name" value="SecA_Wing/Scaffold_sf"/>
</dbReference>
<dbReference type="InterPro" id="IPR036670">
    <property type="entry name" value="SecA_X-link_sf"/>
</dbReference>
<dbReference type="NCBIfam" id="NF009538">
    <property type="entry name" value="PRK12904.1"/>
    <property type="match status" value="1"/>
</dbReference>
<dbReference type="NCBIfam" id="TIGR00963">
    <property type="entry name" value="secA"/>
    <property type="match status" value="1"/>
</dbReference>
<dbReference type="PANTHER" id="PTHR30612:SF0">
    <property type="entry name" value="CHLOROPLAST PROTEIN-TRANSPORTING ATPASE"/>
    <property type="match status" value="1"/>
</dbReference>
<dbReference type="PANTHER" id="PTHR30612">
    <property type="entry name" value="SECA INNER MEMBRANE COMPONENT OF SEC PROTEIN SECRETION SYSTEM"/>
    <property type="match status" value="1"/>
</dbReference>
<dbReference type="Pfam" id="PF21090">
    <property type="entry name" value="P-loop_SecA"/>
    <property type="match status" value="1"/>
</dbReference>
<dbReference type="Pfam" id="PF02810">
    <property type="entry name" value="SEC-C"/>
    <property type="match status" value="1"/>
</dbReference>
<dbReference type="Pfam" id="PF07517">
    <property type="entry name" value="SecA_DEAD"/>
    <property type="match status" value="1"/>
</dbReference>
<dbReference type="Pfam" id="PF01043">
    <property type="entry name" value="SecA_PP_bind"/>
    <property type="match status" value="1"/>
</dbReference>
<dbReference type="Pfam" id="PF07516">
    <property type="entry name" value="SecA_SW"/>
    <property type="match status" value="1"/>
</dbReference>
<dbReference type="PRINTS" id="PR00906">
    <property type="entry name" value="SECA"/>
</dbReference>
<dbReference type="SMART" id="SM00957">
    <property type="entry name" value="SecA_DEAD"/>
    <property type="match status" value="1"/>
</dbReference>
<dbReference type="SMART" id="SM00958">
    <property type="entry name" value="SecA_PP_bind"/>
    <property type="match status" value="1"/>
</dbReference>
<dbReference type="SUPFAM" id="SSF81886">
    <property type="entry name" value="Helical scaffold and wing domains of SecA"/>
    <property type="match status" value="1"/>
</dbReference>
<dbReference type="SUPFAM" id="SSF52540">
    <property type="entry name" value="P-loop containing nucleoside triphosphate hydrolases"/>
    <property type="match status" value="2"/>
</dbReference>
<dbReference type="SUPFAM" id="SSF81767">
    <property type="entry name" value="Pre-protein crosslinking domain of SecA"/>
    <property type="match status" value="1"/>
</dbReference>
<dbReference type="PROSITE" id="PS01312">
    <property type="entry name" value="SECA"/>
    <property type="match status" value="1"/>
</dbReference>
<dbReference type="PROSITE" id="PS51196">
    <property type="entry name" value="SECA_MOTOR_DEAD"/>
    <property type="match status" value="1"/>
</dbReference>
<keyword id="KW-0067">ATP-binding</keyword>
<keyword id="KW-0997">Cell inner membrane</keyword>
<keyword id="KW-1003">Cell membrane</keyword>
<keyword id="KW-0963">Cytoplasm</keyword>
<keyword id="KW-0472">Membrane</keyword>
<keyword id="KW-0479">Metal-binding</keyword>
<keyword id="KW-0547">Nucleotide-binding</keyword>
<keyword id="KW-0653">Protein transport</keyword>
<keyword id="KW-1185">Reference proteome</keyword>
<keyword id="KW-1278">Translocase</keyword>
<keyword id="KW-0811">Translocation</keyword>
<keyword id="KW-0813">Transport</keyword>
<keyword id="KW-0862">Zinc</keyword>
<reference key="1">
    <citation type="journal article" date="2009" name="Appl. Environ. Microbiol.">
        <title>Complete genome sequence of the chemolithoautotrophic marine magnetotactic coccus strain MC-1.</title>
        <authorList>
            <person name="Schubbe S."/>
            <person name="Williams T.J."/>
            <person name="Xie G."/>
            <person name="Kiss H.E."/>
            <person name="Brettin T.S."/>
            <person name="Martinez D."/>
            <person name="Ross C.A."/>
            <person name="Schuler D."/>
            <person name="Cox B.L."/>
            <person name="Nealson K.H."/>
            <person name="Bazylinski D.A."/>
        </authorList>
    </citation>
    <scope>NUCLEOTIDE SEQUENCE [LARGE SCALE GENOMIC DNA]</scope>
    <source>
        <strain>ATCC BAA-1437 / JCM 17883 / MC-1</strain>
    </source>
</reference>
<comment type="function">
    <text evidence="1">Part of the Sec protein translocase complex. Interacts with the SecYEG preprotein conducting channel. Has a central role in coupling the hydrolysis of ATP to the transfer of proteins into and across the cell membrane, serving both as a receptor for the preprotein-SecB complex and as an ATP-driven molecular motor driving the stepwise translocation of polypeptide chains across the membrane.</text>
</comment>
<comment type="catalytic activity">
    <reaction evidence="1">
        <text>ATP + H2O + cellular proteinSide 1 = ADP + phosphate + cellular proteinSide 2.</text>
        <dbReference type="EC" id="7.4.2.8"/>
    </reaction>
</comment>
<comment type="cofactor">
    <cofactor evidence="1">
        <name>Zn(2+)</name>
        <dbReference type="ChEBI" id="CHEBI:29105"/>
    </cofactor>
    <text evidence="1">May bind 1 zinc ion per subunit.</text>
</comment>
<comment type="subunit">
    <text evidence="1">Monomer and homodimer. Part of the essential Sec protein translocation apparatus which comprises SecA, SecYEG and auxiliary proteins SecDF-YajC and YidC.</text>
</comment>
<comment type="subcellular location">
    <subcellularLocation>
        <location evidence="1">Cell inner membrane</location>
        <topology evidence="1">Peripheral membrane protein</topology>
        <orientation evidence="1">Cytoplasmic side</orientation>
    </subcellularLocation>
    <subcellularLocation>
        <location evidence="1">Cytoplasm</location>
    </subcellularLocation>
    <text evidence="1">Distribution is 50-50.</text>
</comment>
<comment type="similarity">
    <text evidence="1">Belongs to the SecA family.</text>
</comment>
<organism>
    <name type="scientific">Magnetococcus marinus (strain ATCC BAA-1437 / JCM 17883 / MC-1)</name>
    <dbReference type="NCBI Taxonomy" id="156889"/>
    <lineage>
        <taxon>Bacteria</taxon>
        <taxon>Pseudomonadati</taxon>
        <taxon>Pseudomonadota</taxon>
        <taxon>Alphaproteobacteria</taxon>
        <taxon>Magnetococcales</taxon>
        <taxon>Magnetococcaceae</taxon>
        <taxon>Magnetococcus</taxon>
    </lineage>
</organism>
<accession>A0LCX0</accession>
<feature type="chain" id="PRO_0000318372" description="Protein translocase subunit SecA 1">
    <location>
        <begin position="1"/>
        <end position="901"/>
    </location>
</feature>
<feature type="region of interest" description="Disordered" evidence="2">
    <location>
        <begin position="847"/>
        <end position="901"/>
    </location>
</feature>
<feature type="binding site" evidence="1">
    <location>
        <position position="87"/>
    </location>
    <ligand>
        <name>ATP</name>
        <dbReference type="ChEBI" id="CHEBI:30616"/>
    </ligand>
</feature>
<feature type="binding site" evidence="1">
    <location>
        <begin position="105"/>
        <end position="109"/>
    </location>
    <ligand>
        <name>ATP</name>
        <dbReference type="ChEBI" id="CHEBI:30616"/>
    </ligand>
</feature>
<feature type="binding site" evidence="1">
    <location>
        <position position="500"/>
    </location>
    <ligand>
        <name>ATP</name>
        <dbReference type="ChEBI" id="CHEBI:30616"/>
    </ligand>
</feature>
<feature type="binding site" evidence="1">
    <location>
        <position position="885"/>
    </location>
    <ligand>
        <name>Zn(2+)</name>
        <dbReference type="ChEBI" id="CHEBI:29105"/>
    </ligand>
</feature>
<feature type="binding site" evidence="1">
    <location>
        <position position="887"/>
    </location>
    <ligand>
        <name>Zn(2+)</name>
        <dbReference type="ChEBI" id="CHEBI:29105"/>
    </ligand>
</feature>
<feature type="binding site" evidence="1">
    <location>
        <position position="896"/>
    </location>
    <ligand>
        <name>Zn(2+)</name>
        <dbReference type="ChEBI" id="CHEBI:29105"/>
    </ligand>
</feature>
<feature type="binding site" evidence="1">
    <location>
        <position position="897"/>
    </location>
    <ligand>
        <name>Zn(2+)</name>
        <dbReference type="ChEBI" id="CHEBI:29105"/>
    </ligand>
</feature>
<gene>
    <name evidence="1" type="primary">secA1</name>
    <name type="ordered locus">Mmc1_3327</name>
</gene>
<sequence length="901" mass="102548">MFSAIARKLFGSRNDRYLRSLQPLVDRINGLEAEYEALSDSELTAMTYAFKARLEKGETLDDLLPEAFAVVREGSKRVLGMRHYDVQLIGGIVLHQGKISEMKTGEGKTLVATLSLYLNALSGKGAHLVTVNDYLARRDAEWMGKLYQFLGLSVGVIIHGIEDQQRKAAYNADITYGTNNEFGFDYLRDNMKFSLEEMVQRPLNYAIVDEVDSILVDEARTPLIISGPTEDSTDKYYKVDRLIPQLEKERHYTLDEKQRSVTFTEEGNEQIEQLMRQAGLLRDGDLYDLHNIEMVHHVNQALKAHAMFEVDRDYIVKDGQVVIIDEFTGRMMPGRRYSDGLHQALEAKEQVVIQNESQTLASITFQNLFRLYNKLAGMTGTADTEAAEFQSIYNLEVVIIPTNRDMVRIDRDDMVFRTLEEKLKAVAEDIKVSYEKGQPVLVGTVSIEKSEMVSHFLKKLKIPHEILNAKHHEREAEIVAQAGRPRAVTIATNMAGRGTDIQLGGNLEMRLKKEIDPEASPAERTQQEIQIRTEYEQDKALVLASGGLHIIGTERHESRRIDNQLRGRAGRQGDPGSSGFYLSLQDDLMRIFGSERMDGMLKKLGLQDGEAIVHPWINKAVESAQKKVEGRNFDIRKNLLKFDDVMNEQRKVIYDQRKELMENEDIRDFIDEIREEVVHALVDSHLGEDVYPEEWDAKGFREAMLNQFNLDLNVESWKHEEGVTHLVAKERAMAAVKAYSEAREARLGPPLMRYLEKSIMLQVLDTLWKEHLLNMDHLKEGIHLRGYAQKDPLNEYKREAFQLFSMLLQRIREEAIEFLGKVEVQQPEEVAAYEAELAEARNQQMSLNHPESGSWGGEGEGPSSEGAPHLPFKRDGEKVGRNQACPCGSGKKYKQCCGKLS</sequence>
<proteinExistence type="inferred from homology"/>
<evidence type="ECO:0000255" key="1">
    <source>
        <dbReference type="HAMAP-Rule" id="MF_01382"/>
    </source>
</evidence>
<evidence type="ECO:0000256" key="2">
    <source>
        <dbReference type="SAM" id="MobiDB-lite"/>
    </source>
</evidence>
<name>SECA1_MAGMM</name>